<protein>
    <recommendedName>
        <fullName>S-crystallin 3</fullName>
    </recommendedName>
    <alternativeName>
        <fullName>OL3</fullName>
    </alternativeName>
</protein>
<name>SCRY3_ENTDO</name>
<dbReference type="EMBL" id="M65186">
    <property type="protein sequence ID" value="AAA29388.1"/>
    <property type="molecule type" value="mRNA"/>
</dbReference>
<dbReference type="PIR" id="C41681">
    <property type="entry name" value="C41681"/>
</dbReference>
<dbReference type="SMR" id="P27011"/>
<dbReference type="GO" id="GO:0004364">
    <property type="term" value="F:glutathione transferase activity"/>
    <property type="evidence" value="ECO:0007669"/>
    <property type="project" value="TreeGrafter"/>
</dbReference>
<dbReference type="GO" id="GO:0005212">
    <property type="term" value="F:structural constituent of eye lens"/>
    <property type="evidence" value="ECO:0007669"/>
    <property type="project" value="UniProtKB-KW"/>
</dbReference>
<dbReference type="GO" id="GO:0006749">
    <property type="term" value="P:glutathione metabolic process"/>
    <property type="evidence" value="ECO:0007669"/>
    <property type="project" value="TreeGrafter"/>
</dbReference>
<dbReference type="CDD" id="cd03192">
    <property type="entry name" value="GST_C_Sigma_like"/>
    <property type="match status" value="1"/>
</dbReference>
<dbReference type="CDD" id="cd03039">
    <property type="entry name" value="GST_N_Sigma_like"/>
    <property type="match status" value="1"/>
</dbReference>
<dbReference type="FunFam" id="3.40.30.10:FF:000035">
    <property type="entry name" value="hematopoietic prostaglandin D synthase"/>
    <property type="match status" value="1"/>
</dbReference>
<dbReference type="Gene3D" id="1.20.1050.10">
    <property type="match status" value="1"/>
</dbReference>
<dbReference type="Gene3D" id="3.40.30.10">
    <property type="entry name" value="Glutaredoxin"/>
    <property type="match status" value="1"/>
</dbReference>
<dbReference type="InterPro" id="IPR010987">
    <property type="entry name" value="Glutathione-S-Trfase_C-like"/>
</dbReference>
<dbReference type="InterPro" id="IPR036282">
    <property type="entry name" value="Glutathione-S-Trfase_C_sf"/>
</dbReference>
<dbReference type="InterPro" id="IPR004045">
    <property type="entry name" value="Glutathione_S-Trfase_N"/>
</dbReference>
<dbReference type="InterPro" id="IPR004046">
    <property type="entry name" value="GST_C"/>
</dbReference>
<dbReference type="InterPro" id="IPR050213">
    <property type="entry name" value="GST_superfamily"/>
</dbReference>
<dbReference type="InterPro" id="IPR003083">
    <property type="entry name" value="S-crystallin"/>
</dbReference>
<dbReference type="InterPro" id="IPR036249">
    <property type="entry name" value="Thioredoxin-like_sf"/>
</dbReference>
<dbReference type="PANTHER" id="PTHR11571">
    <property type="entry name" value="GLUTATHIONE S-TRANSFERASE"/>
    <property type="match status" value="1"/>
</dbReference>
<dbReference type="PANTHER" id="PTHR11571:SF150">
    <property type="entry name" value="GLUTATHIONE S-TRANSFERASE"/>
    <property type="match status" value="1"/>
</dbReference>
<dbReference type="Pfam" id="PF14497">
    <property type="entry name" value="GST_C_3"/>
    <property type="match status" value="1"/>
</dbReference>
<dbReference type="Pfam" id="PF02798">
    <property type="entry name" value="GST_N"/>
    <property type="match status" value="1"/>
</dbReference>
<dbReference type="PRINTS" id="PR01269">
    <property type="entry name" value="SCRYSTALLIN"/>
</dbReference>
<dbReference type="SFLD" id="SFLDG01205">
    <property type="entry name" value="AMPS.1"/>
    <property type="match status" value="1"/>
</dbReference>
<dbReference type="SFLD" id="SFLDG00363">
    <property type="entry name" value="AMPS_(cytGST):_Alpha-__Mu-__Pi"/>
    <property type="match status" value="1"/>
</dbReference>
<dbReference type="SUPFAM" id="SSF47616">
    <property type="entry name" value="GST C-terminal domain-like"/>
    <property type="match status" value="1"/>
</dbReference>
<dbReference type="SUPFAM" id="SSF52833">
    <property type="entry name" value="Thioredoxin-like"/>
    <property type="match status" value="1"/>
</dbReference>
<dbReference type="PROSITE" id="PS50405">
    <property type="entry name" value="GST_CTER"/>
    <property type="match status" value="1"/>
</dbReference>
<dbReference type="PROSITE" id="PS50404">
    <property type="entry name" value="GST_NTER"/>
    <property type="match status" value="1"/>
</dbReference>
<comment type="function">
    <text>S-crystallins are structural components of squids and octopi eye lens. Contains relatively little if any GST activity.</text>
</comment>
<comment type="tissue specificity">
    <text>Lens.</text>
</comment>
<comment type="similarity">
    <text evidence="1">Belongs to the GST superfamily.</text>
</comment>
<organism>
    <name type="scientific">Enteroctopus dofleini</name>
    <name type="common">North Pacific giant octopus</name>
    <name type="synonym">Octopus dofleini</name>
    <dbReference type="NCBI Taxonomy" id="267067"/>
    <lineage>
        <taxon>Eukaryota</taxon>
        <taxon>Metazoa</taxon>
        <taxon>Spiralia</taxon>
        <taxon>Lophotrochozoa</taxon>
        <taxon>Mollusca</taxon>
        <taxon>Cephalopoda</taxon>
        <taxon>Coleoidea</taxon>
        <taxon>Octopodiformes</taxon>
        <taxon>Octopoda</taxon>
        <taxon>Incirrata</taxon>
        <taxon>Octopodidae</taxon>
        <taxon>Enteroctopus</taxon>
    </lineage>
</organism>
<proteinExistence type="evidence at transcript level"/>
<evidence type="ECO:0000305" key="1"/>
<sequence length="215" mass="25679">MPSYTLHYFNHRGRAEICRMLFAAAGVQYNDRRIESSEWNGMRNQMPCNMMPMLELDNRTQIPQSMAMARYLAREFGYHGKSNMEMARVDFISDCFYDIMDDYMRMYQDGNCRMMFQRSRDMNSSSESRMRFQETCRRILPFMERTLDMHSGGSKFFMGDQMTMADMMCYCALENPLMEESSMLSSYPKLMSLRNRVMSHPKMCNYLKKRCRTDF</sequence>
<accession>P27011</accession>
<feature type="chain" id="PRO_0000185994" description="S-crystallin 3">
    <location>
        <begin position="1"/>
        <end position="215"/>
    </location>
</feature>
<feature type="domain" description="GST N-terminal">
    <location>
        <begin position="2"/>
        <end position="80"/>
    </location>
</feature>
<feature type="domain" description="GST C-terminal">
    <location>
        <begin position="82"/>
        <end position="215"/>
    </location>
</feature>
<reference key="1">
    <citation type="journal article" date="1991" name="J. Biol. Chem.">
        <title>Crystallins of the octopus lens. Recruitment from detoxification enzymes.</title>
        <authorList>
            <person name="Tomarev S.I."/>
            <person name="Zinovieva R.D."/>
            <person name="Piatigorsky J."/>
        </authorList>
    </citation>
    <scope>NUCLEOTIDE SEQUENCE [MRNA]</scope>
    <source>
        <tissue>Lens</tissue>
    </source>
</reference>
<keyword id="KW-0273">Eye lens protein</keyword>